<reference key="1">
    <citation type="journal article" date="2008" name="J. Biotechnol.">
        <title>The genome of Xanthomonas campestris pv. campestris B100 and its use for the reconstruction of metabolic pathways involved in xanthan biosynthesis.</title>
        <authorList>
            <person name="Vorhoelter F.-J."/>
            <person name="Schneiker S."/>
            <person name="Goesmann A."/>
            <person name="Krause L."/>
            <person name="Bekel T."/>
            <person name="Kaiser O."/>
            <person name="Linke B."/>
            <person name="Patschkowski T."/>
            <person name="Rueckert C."/>
            <person name="Schmid J."/>
            <person name="Sidhu V.K."/>
            <person name="Sieber V."/>
            <person name="Tauch A."/>
            <person name="Watt S.A."/>
            <person name="Weisshaar B."/>
            <person name="Becker A."/>
            <person name="Niehaus K."/>
            <person name="Puehler A."/>
        </authorList>
    </citation>
    <scope>NUCLEOTIDE SEQUENCE [LARGE SCALE GENOMIC DNA]</scope>
    <source>
        <strain>B100</strain>
    </source>
</reference>
<evidence type="ECO:0000255" key="1">
    <source>
        <dbReference type="HAMAP-Rule" id="MF_00255"/>
    </source>
</evidence>
<accession>B0RYX3</accession>
<dbReference type="EC" id="6.1.1.14" evidence="1"/>
<dbReference type="EMBL" id="AM920689">
    <property type="protein sequence ID" value="CAP53659.1"/>
    <property type="molecule type" value="Genomic_DNA"/>
</dbReference>
<dbReference type="SMR" id="B0RYX3"/>
<dbReference type="KEGG" id="xca:xcc-b100_4289"/>
<dbReference type="HOGENOM" id="CLU_007220_2_2_6"/>
<dbReference type="Proteomes" id="UP000001188">
    <property type="component" value="Chromosome"/>
</dbReference>
<dbReference type="GO" id="GO:0005829">
    <property type="term" value="C:cytosol"/>
    <property type="evidence" value="ECO:0007669"/>
    <property type="project" value="TreeGrafter"/>
</dbReference>
<dbReference type="GO" id="GO:0004814">
    <property type="term" value="F:arginine-tRNA ligase activity"/>
    <property type="evidence" value="ECO:0007669"/>
    <property type="project" value="InterPro"/>
</dbReference>
<dbReference type="GO" id="GO:0005524">
    <property type="term" value="F:ATP binding"/>
    <property type="evidence" value="ECO:0007669"/>
    <property type="project" value="UniProtKB-UniRule"/>
</dbReference>
<dbReference type="GO" id="GO:0004820">
    <property type="term" value="F:glycine-tRNA ligase activity"/>
    <property type="evidence" value="ECO:0007669"/>
    <property type="project" value="UniProtKB-UniRule"/>
</dbReference>
<dbReference type="GO" id="GO:0006420">
    <property type="term" value="P:arginyl-tRNA aminoacylation"/>
    <property type="evidence" value="ECO:0007669"/>
    <property type="project" value="InterPro"/>
</dbReference>
<dbReference type="GO" id="GO:0006426">
    <property type="term" value="P:glycyl-tRNA aminoacylation"/>
    <property type="evidence" value="ECO:0007669"/>
    <property type="project" value="UniProtKB-UniRule"/>
</dbReference>
<dbReference type="HAMAP" id="MF_00255">
    <property type="entry name" value="Gly_tRNA_synth_beta"/>
    <property type="match status" value="1"/>
</dbReference>
<dbReference type="InterPro" id="IPR008909">
    <property type="entry name" value="DALR_anticod-bd"/>
</dbReference>
<dbReference type="InterPro" id="IPR015944">
    <property type="entry name" value="Gly-tRNA-synth_bsu"/>
</dbReference>
<dbReference type="InterPro" id="IPR006194">
    <property type="entry name" value="Gly-tRNA-synth_heterodimer"/>
</dbReference>
<dbReference type="NCBIfam" id="TIGR00211">
    <property type="entry name" value="glyS"/>
    <property type="match status" value="1"/>
</dbReference>
<dbReference type="PANTHER" id="PTHR30075:SF2">
    <property type="entry name" value="GLYCINE--TRNA LIGASE, CHLOROPLASTIC_MITOCHONDRIAL 2"/>
    <property type="match status" value="1"/>
</dbReference>
<dbReference type="PANTHER" id="PTHR30075">
    <property type="entry name" value="GLYCYL-TRNA SYNTHETASE"/>
    <property type="match status" value="1"/>
</dbReference>
<dbReference type="Pfam" id="PF05746">
    <property type="entry name" value="DALR_1"/>
    <property type="match status" value="1"/>
</dbReference>
<dbReference type="Pfam" id="PF02092">
    <property type="entry name" value="tRNA_synt_2f"/>
    <property type="match status" value="1"/>
</dbReference>
<dbReference type="PRINTS" id="PR01045">
    <property type="entry name" value="TRNASYNTHGB"/>
</dbReference>
<dbReference type="SMART" id="SM00836">
    <property type="entry name" value="DALR_1"/>
    <property type="match status" value="1"/>
</dbReference>
<dbReference type="SUPFAM" id="SSF109604">
    <property type="entry name" value="HD-domain/PDEase-like"/>
    <property type="match status" value="1"/>
</dbReference>
<dbReference type="PROSITE" id="PS50861">
    <property type="entry name" value="AA_TRNA_LIGASE_II_GLYAB"/>
    <property type="match status" value="1"/>
</dbReference>
<gene>
    <name evidence="1" type="primary">glyS</name>
    <name type="ordered locus">xcc-b100_4289</name>
</gene>
<feature type="chain" id="PRO_1000101371" description="Glycine--tRNA ligase beta subunit">
    <location>
        <begin position="1"/>
        <end position="698"/>
    </location>
</feature>
<sequence length="698" mass="75049">MSEQLPLLIELGTEELPVKALPGLAQAFFDGVLAGLEKRGVAVTRGDAKPLSTPRRLAVLLPGVATEQPEQRSEVLGPYLNIALDAEGKPTRALAGFAAKAGIDWTALERTSDAKGERFVHRAVTPGAQAAALLPEILREAIAAMPIPKPMRWGAHEYAFARPVQWLVLLFGDTVIPAELLGVRGDRITRGHRFMHDGDIALAAPGDYIDALRAAHVLVDADARRARIVEEVDAAARQAGGSARISDDNLEQVVNLVEWPSAVLCSFERAFLAVPQEALIETMEINQKFFPVLDDGGKLTEQFIGIANIVSKDVAEVAKGYERVIRPRFADAKFFFDEDLKQGLEAMGAGLASVTYQAKLGTVADKVARVAALAEAIAPQVGADPVQARRAAELAKNDLQSRMVNEFPELQGIAGRHYAKAAGEPSEISLAIDEAYQPRFAGDDIALSPLGKVLAIAERLDTLAGGFAAGLKPTGNKDPFALRRNALGLARTVIESGFDLDLPKLIDVGLASLPDAVKPHADRNTETVRADLYDFILDRLKGYYADKGVAATHFNAVAELTPASLYDFDRRIDAIGIFATLPEAEALAAANKRIRNILRKVEGEIPGDIDTTLLREPAEEALAEAVEAAIGDTGDALHRHDYVAVLARLARLRPQVDAFFDGVMVNADDPQLRANRLALLKKLGDRLGSVAAIEHLSS</sequence>
<protein>
    <recommendedName>
        <fullName evidence="1">Glycine--tRNA ligase beta subunit</fullName>
        <ecNumber evidence="1">6.1.1.14</ecNumber>
    </recommendedName>
    <alternativeName>
        <fullName evidence="1">Glycyl-tRNA synthetase beta subunit</fullName>
        <shortName evidence="1">GlyRS</shortName>
    </alternativeName>
</protein>
<keyword id="KW-0030">Aminoacyl-tRNA synthetase</keyword>
<keyword id="KW-0067">ATP-binding</keyword>
<keyword id="KW-0963">Cytoplasm</keyword>
<keyword id="KW-0436">Ligase</keyword>
<keyword id="KW-0547">Nucleotide-binding</keyword>
<keyword id="KW-0648">Protein biosynthesis</keyword>
<name>SYGB_XANCB</name>
<proteinExistence type="inferred from homology"/>
<comment type="catalytic activity">
    <reaction evidence="1">
        <text>tRNA(Gly) + glycine + ATP = glycyl-tRNA(Gly) + AMP + diphosphate</text>
        <dbReference type="Rhea" id="RHEA:16013"/>
        <dbReference type="Rhea" id="RHEA-COMP:9664"/>
        <dbReference type="Rhea" id="RHEA-COMP:9683"/>
        <dbReference type="ChEBI" id="CHEBI:30616"/>
        <dbReference type="ChEBI" id="CHEBI:33019"/>
        <dbReference type="ChEBI" id="CHEBI:57305"/>
        <dbReference type="ChEBI" id="CHEBI:78442"/>
        <dbReference type="ChEBI" id="CHEBI:78522"/>
        <dbReference type="ChEBI" id="CHEBI:456215"/>
        <dbReference type="EC" id="6.1.1.14"/>
    </reaction>
</comment>
<comment type="subunit">
    <text evidence="1">Tetramer of two alpha and two beta subunits.</text>
</comment>
<comment type="subcellular location">
    <subcellularLocation>
        <location evidence="1">Cytoplasm</location>
    </subcellularLocation>
</comment>
<comment type="similarity">
    <text evidence="1">Belongs to the class-II aminoacyl-tRNA synthetase family.</text>
</comment>
<organism>
    <name type="scientific">Xanthomonas campestris pv. campestris (strain B100)</name>
    <dbReference type="NCBI Taxonomy" id="509169"/>
    <lineage>
        <taxon>Bacteria</taxon>
        <taxon>Pseudomonadati</taxon>
        <taxon>Pseudomonadota</taxon>
        <taxon>Gammaproteobacteria</taxon>
        <taxon>Lysobacterales</taxon>
        <taxon>Lysobacteraceae</taxon>
        <taxon>Xanthomonas</taxon>
    </lineage>
</organism>